<comment type="function">
    <text evidence="6 7 8 9 10 11 12 13">Transports lipids such as glucosylceramides from the outer to the inner leaflet of lamellar granules (LGs) membrane, whereby the lipids are finally transported to the keratinocyte periphery via the trans-Golgi network and LGs and released to the apical surface of the granular keratinocytes to form lipid lamellae in the stratum corneum of the epidermis, which is essential for skin barrier function (PubMed:18802465, PubMed:18957418, PubMed:20489143, PubMed:24293640, PubMed:27551807). In the meantime, participates in the transport of the lamellar granules-associated proteolytic enzymes, in turn regulates desquamation and keratinocyte differentiation (PubMed:20489143, PubMed:27551807). Furthermore, is essential for the regulation of cellular cholesterol homeostasis by regulating ABCA1-dependent cholesterol efflux from macrophages through interaction with NR1H2 and ABCA1 (PubMed:18802465, PubMed:23931754). Plays pleiotropic roles in regulating glucose stimulated insulin secretion from beta cells, regulating the morphology and fusion of insulin granules, lipid raft abundance and the actin cytoskeleton (PubMed:32072744). Also involved in lung surfactant biogenesis (PubMed:18632686).</text>
</comment>
<comment type="catalytic activity">
    <reaction evidence="2">
        <text>ATP + H2O + phospholipidSide 1 = ADP + phosphate + phospholipidSide 2.</text>
        <dbReference type="EC" id="7.6.2.1"/>
    </reaction>
</comment>
<comment type="catalytic activity">
    <reaction evidence="2">
        <text>a beta-D-glucosylceramide(in) + ATP + H2O = a beta-D-glucosylceramide(out) + ADP + phosphate + H(+)</text>
        <dbReference type="Rhea" id="RHEA:66660"/>
        <dbReference type="ChEBI" id="CHEBI:15377"/>
        <dbReference type="ChEBI" id="CHEBI:15378"/>
        <dbReference type="ChEBI" id="CHEBI:30616"/>
        <dbReference type="ChEBI" id="CHEBI:43474"/>
        <dbReference type="ChEBI" id="CHEBI:83264"/>
        <dbReference type="ChEBI" id="CHEBI:456216"/>
    </reaction>
    <physiologicalReaction direction="left-to-right" evidence="2">
        <dbReference type="Rhea" id="RHEA:66661"/>
    </physiologicalReaction>
</comment>
<comment type="subunit">
    <text evidence="10">Interacts with NR1H2 and ABCA1; this interaction is required for ABCA1 localization to the cell surface and is necessary for its normal activity and stability.</text>
</comment>
<comment type="subcellular location">
    <subcellularLocation>
        <location evidence="2">Cytoplasmic vesicle</location>
        <location evidence="2">Secretory vesicle membrane</location>
        <topology evidence="2">Multi-pass membrane protein</topology>
    </subcellularLocation>
    <subcellularLocation>
        <location evidence="2">Golgi apparatus membrane</location>
    </subcellularLocation>
    <text evidence="2">Localizes in the limiting membrane of the lamellar granules (LGs). Trafficks from the Golgi apparatus to the lamellar granules (LGs) at the cell periphery in the uppermost granular layer keratinocytes where ABCA12-positive LGs fuse with the keratinocyte-cell membrane to secrete their lipid content to the extracellular space of the stratum corneum. Co-localizes through the Golgi apparatus to the cell periphery with glucosylceramide.</text>
</comment>
<comment type="tissue specificity">
    <text evidence="6 11 13">Expressed in a number of other tissues besides skin, including heart, intestine, stomach, and kidney (PubMed:24293640). Expressed mainly in the granular layer of the skin (PubMed:18632686). Expressed in lung (PubMed:18632686). Expressed in alpha and beta cells of pancreatic islets (PubMed:32072744).</text>
</comment>
<comment type="developmental stage">
    <text evidence="11">At 18.5 dpc highly expressed in the epidermis, and weakly in the stomach.</text>
</comment>
<comment type="induction">
    <text evidence="14">Up-regulated during barrier recovery.</text>
</comment>
<comment type="domain">
    <text evidence="1">Multifunctional polypeptide with two homologous halves, each containing a hydrophobic membrane-anchoring domain and an ATP binding cassette (ABC) domain.</text>
</comment>
<comment type="disruption phenotype">
    <text evidence="6 8">Homozygous knockout mice for Abca12 are born with a thickened epidermis and die shortly after birth, as water rapidly evaporates from their skin (PubMed:18957418). In a mouse model for harlequin ichthyosis (HI), homozygous knockout mice are smaller and die within a few hours and their entire body are covered of erythematous skin, making their skin less flexible. The entire skin surface is covered with thick scales and some mice develop skin fissures and eversions of the lips (eclabium). At 18.5 dpc, fetuses develop taut and shiny skin without normal skin folds and show contractures of the limbs. The lungs of the present model mice show signs of alveolar collapse (PubMed:18632686).</text>
</comment>
<comment type="similarity">
    <text evidence="15">Belongs to the ABC transporter superfamily. ABCA family.</text>
</comment>
<organism>
    <name type="scientific">Mus musculus</name>
    <name type="common">Mouse</name>
    <dbReference type="NCBI Taxonomy" id="10090"/>
    <lineage>
        <taxon>Eukaryota</taxon>
        <taxon>Metazoa</taxon>
        <taxon>Chordata</taxon>
        <taxon>Craniata</taxon>
        <taxon>Vertebrata</taxon>
        <taxon>Euteleostomi</taxon>
        <taxon>Mammalia</taxon>
        <taxon>Eutheria</taxon>
        <taxon>Euarchontoglires</taxon>
        <taxon>Glires</taxon>
        <taxon>Rodentia</taxon>
        <taxon>Myomorpha</taxon>
        <taxon>Muroidea</taxon>
        <taxon>Muridae</taxon>
        <taxon>Murinae</taxon>
        <taxon>Mus</taxon>
        <taxon>Mus</taxon>
    </lineage>
</organism>
<dbReference type="EC" id="7.6.2.1" evidence="2"/>
<dbReference type="EMBL" id="AC107789">
    <property type="status" value="NOT_ANNOTATED_CDS"/>
    <property type="molecule type" value="Genomic_DNA"/>
</dbReference>
<dbReference type="EMBL" id="AC138589">
    <property type="status" value="NOT_ANNOTATED_CDS"/>
    <property type="molecule type" value="Genomic_DNA"/>
</dbReference>
<dbReference type="CCDS" id="CCDS48286.1"/>
<dbReference type="RefSeq" id="NP_780419.2">
    <property type="nucleotide sequence ID" value="NM_175210.3"/>
</dbReference>
<dbReference type="SMR" id="E9Q876"/>
<dbReference type="FunCoup" id="E9Q876">
    <property type="interactions" value="303"/>
</dbReference>
<dbReference type="STRING" id="10090.ENSMUSP00000084523"/>
<dbReference type="GlyCosmos" id="E9Q876">
    <property type="glycosylation" value="39 sites, No reported glycans"/>
</dbReference>
<dbReference type="GlyGen" id="E9Q876">
    <property type="glycosylation" value="40 sites"/>
</dbReference>
<dbReference type="iPTMnet" id="E9Q876"/>
<dbReference type="PhosphoSitePlus" id="E9Q876"/>
<dbReference type="PaxDb" id="10090-ENSMUSP00000084523"/>
<dbReference type="ProteomicsDB" id="324613"/>
<dbReference type="Antibodypedia" id="34220">
    <property type="antibodies" value="141 antibodies from 26 providers"/>
</dbReference>
<dbReference type="DNASU" id="74591"/>
<dbReference type="Ensembl" id="ENSMUST00000087268.7">
    <property type="protein sequence ID" value="ENSMUSP00000084523.6"/>
    <property type="gene ID" value="ENSMUSG00000050296.15"/>
</dbReference>
<dbReference type="GeneID" id="74591"/>
<dbReference type="KEGG" id="mmu:74591"/>
<dbReference type="UCSC" id="uc011wmq.1">
    <property type="organism name" value="mouse"/>
</dbReference>
<dbReference type="AGR" id="MGI:2676312"/>
<dbReference type="CTD" id="26154"/>
<dbReference type="MGI" id="MGI:2676312">
    <property type="gene designation" value="Abca12"/>
</dbReference>
<dbReference type="VEuPathDB" id="HostDB:ENSMUSG00000050296"/>
<dbReference type="eggNOG" id="KOG0059">
    <property type="taxonomic scope" value="Eukaryota"/>
</dbReference>
<dbReference type="GeneTree" id="ENSGT00940000157295"/>
<dbReference type="HOGENOM" id="CLU_000604_19_7_1"/>
<dbReference type="InParanoid" id="E9Q876"/>
<dbReference type="OMA" id="TYIVREH"/>
<dbReference type="OrthoDB" id="10255969at2759"/>
<dbReference type="PhylomeDB" id="E9Q876"/>
<dbReference type="TreeFam" id="TF105191"/>
<dbReference type="Reactome" id="R-MMU-1369062">
    <property type="pathway name" value="ABC transporters in lipid homeostasis"/>
</dbReference>
<dbReference type="BioGRID-ORCS" id="74591">
    <property type="hits" value="2 hits in 80 CRISPR screens"/>
</dbReference>
<dbReference type="ChiTaRS" id="Abca12">
    <property type="organism name" value="mouse"/>
</dbReference>
<dbReference type="PRO" id="PR:E9Q876"/>
<dbReference type="Proteomes" id="UP000000589">
    <property type="component" value="Chromosome 1"/>
</dbReference>
<dbReference type="RNAct" id="E9Q876">
    <property type="molecule type" value="protein"/>
</dbReference>
<dbReference type="Bgee" id="ENSMUSG00000050296">
    <property type="expression patterns" value="Expressed in esophagus and 27 other cell types or tissues"/>
</dbReference>
<dbReference type="GO" id="GO:0005829">
    <property type="term" value="C:cytosol"/>
    <property type="evidence" value="ECO:0000314"/>
    <property type="project" value="MGI"/>
</dbReference>
<dbReference type="GO" id="GO:0097234">
    <property type="term" value="C:epidermal lamellar body membrane"/>
    <property type="evidence" value="ECO:0000250"/>
    <property type="project" value="UniProtKB"/>
</dbReference>
<dbReference type="GO" id="GO:0000139">
    <property type="term" value="C:Golgi membrane"/>
    <property type="evidence" value="ECO:0000250"/>
    <property type="project" value="UniProtKB"/>
</dbReference>
<dbReference type="GO" id="GO:0005743">
    <property type="term" value="C:mitochondrial inner membrane"/>
    <property type="evidence" value="ECO:0007005"/>
    <property type="project" value="MGI"/>
</dbReference>
<dbReference type="GO" id="GO:0005886">
    <property type="term" value="C:plasma membrane"/>
    <property type="evidence" value="ECO:0007669"/>
    <property type="project" value="Ensembl"/>
</dbReference>
<dbReference type="GO" id="GO:0030658">
    <property type="term" value="C:transport vesicle membrane"/>
    <property type="evidence" value="ECO:0007669"/>
    <property type="project" value="UniProtKB-SubCell"/>
</dbReference>
<dbReference type="GO" id="GO:0140359">
    <property type="term" value="F:ABC-type transporter activity"/>
    <property type="evidence" value="ECO:0007669"/>
    <property type="project" value="InterPro"/>
</dbReference>
<dbReference type="GO" id="GO:0034191">
    <property type="term" value="F:apolipoprotein A-I receptor binding"/>
    <property type="evidence" value="ECO:0007669"/>
    <property type="project" value="Ensembl"/>
</dbReference>
<dbReference type="GO" id="GO:0005524">
    <property type="term" value="F:ATP binding"/>
    <property type="evidence" value="ECO:0007669"/>
    <property type="project" value="UniProtKB-KW"/>
</dbReference>
<dbReference type="GO" id="GO:0016887">
    <property type="term" value="F:ATP hydrolysis activity"/>
    <property type="evidence" value="ECO:0007669"/>
    <property type="project" value="InterPro"/>
</dbReference>
<dbReference type="GO" id="GO:0140326">
    <property type="term" value="F:ATPase-coupled intramembrane lipid transporter activity"/>
    <property type="evidence" value="ECO:0007669"/>
    <property type="project" value="UniProtKB-EC"/>
</dbReference>
<dbReference type="GO" id="GO:0006672">
    <property type="term" value="P:ceramide metabolic process"/>
    <property type="evidence" value="ECO:0000315"/>
    <property type="project" value="UniProtKB"/>
</dbReference>
<dbReference type="GO" id="GO:0035627">
    <property type="term" value="P:ceramide transport"/>
    <property type="evidence" value="ECO:0000315"/>
    <property type="project" value="UniProtKB"/>
</dbReference>
<dbReference type="GO" id="GO:0033344">
    <property type="term" value="P:cholesterol efflux"/>
    <property type="evidence" value="ECO:0000315"/>
    <property type="project" value="MGI"/>
</dbReference>
<dbReference type="GO" id="GO:0003336">
    <property type="term" value="P:corneocyte desquamation"/>
    <property type="evidence" value="ECO:0000315"/>
    <property type="project" value="UniProtKB"/>
</dbReference>
<dbReference type="GO" id="GO:0051649">
    <property type="term" value="P:establishment of localization in cell"/>
    <property type="evidence" value="ECO:0000315"/>
    <property type="project" value="MGI"/>
</dbReference>
<dbReference type="GO" id="GO:0061436">
    <property type="term" value="P:establishment of skin barrier"/>
    <property type="evidence" value="ECO:0000315"/>
    <property type="project" value="UniProtKB"/>
</dbReference>
<dbReference type="GO" id="GO:0006886">
    <property type="term" value="P:intracellular protein transport"/>
    <property type="evidence" value="ECO:0000250"/>
    <property type="project" value="UniProtKB"/>
</dbReference>
<dbReference type="GO" id="GO:0031424">
    <property type="term" value="P:keratinization"/>
    <property type="evidence" value="ECO:0000315"/>
    <property type="project" value="MGI"/>
</dbReference>
<dbReference type="GO" id="GO:0030216">
    <property type="term" value="P:keratinocyte differentiation"/>
    <property type="evidence" value="ECO:0000315"/>
    <property type="project" value="MGI"/>
</dbReference>
<dbReference type="GO" id="GO:0055088">
    <property type="term" value="P:lipid homeostasis"/>
    <property type="evidence" value="ECO:0000315"/>
    <property type="project" value="MGI"/>
</dbReference>
<dbReference type="GO" id="GO:0048286">
    <property type="term" value="P:lung alveolus development"/>
    <property type="evidence" value="ECO:0000315"/>
    <property type="project" value="MGI"/>
</dbReference>
<dbReference type="GO" id="GO:0033700">
    <property type="term" value="P:phospholipid efflux"/>
    <property type="evidence" value="ECO:0007669"/>
    <property type="project" value="Ensembl"/>
</dbReference>
<dbReference type="GO" id="GO:0010875">
    <property type="term" value="P:positive regulation of cholesterol efflux"/>
    <property type="evidence" value="ECO:0000315"/>
    <property type="project" value="MGI"/>
</dbReference>
<dbReference type="GO" id="GO:0032379">
    <property type="term" value="P:positive regulation of intracellular lipid transport"/>
    <property type="evidence" value="ECO:0000315"/>
    <property type="project" value="UniProtKB"/>
</dbReference>
<dbReference type="GO" id="GO:2000010">
    <property type="term" value="P:positive regulation of protein localization to cell surface"/>
    <property type="evidence" value="ECO:0000315"/>
    <property type="project" value="MGI"/>
</dbReference>
<dbReference type="GO" id="GO:0072659">
    <property type="term" value="P:protein localization to plasma membrane"/>
    <property type="evidence" value="ECO:0007669"/>
    <property type="project" value="Ensembl"/>
</dbReference>
<dbReference type="GO" id="GO:0045055">
    <property type="term" value="P:regulated exocytosis"/>
    <property type="evidence" value="ECO:0007669"/>
    <property type="project" value="Ensembl"/>
</dbReference>
<dbReference type="GO" id="GO:0061178">
    <property type="term" value="P:regulation of insulin secretion involved in cellular response to glucose stimulus"/>
    <property type="evidence" value="ECO:0000315"/>
    <property type="project" value="UniProtKB"/>
</dbReference>
<dbReference type="GO" id="GO:0045616">
    <property type="term" value="P:regulation of keratinocyte differentiation"/>
    <property type="evidence" value="ECO:0000315"/>
    <property type="project" value="UniProtKB"/>
</dbReference>
<dbReference type="GO" id="GO:0043129">
    <property type="term" value="P:surfactant homeostasis"/>
    <property type="evidence" value="ECO:0000315"/>
    <property type="project" value="MGI"/>
</dbReference>
<dbReference type="CDD" id="cd03263">
    <property type="entry name" value="ABC_subfamily_A"/>
    <property type="match status" value="2"/>
</dbReference>
<dbReference type="FunFam" id="3.40.50.300:FF:000689">
    <property type="entry name" value="ATP binding cassette subfamily A member 12"/>
    <property type="match status" value="1"/>
</dbReference>
<dbReference type="FunFam" id="3.40.50.300:FF:000298">
    <property type="entry name" value="ATP-binding cassette sub-family A member 12"/>
    <property type="match status" value="1"/>
</dbReference>
<dbReference type="Gene3D" id="3.40.50.300">
    <property type="entry name" value="P-loop containing nucleotide triphosphate hydrolases"/>
    <property type="match status" value="2"/>
</dbReference>
<dbReference type="InterPro" id="IPR003593">
    <property type="entry name" value="AAA+_ATPase"/>
</dbReference>
<dbReference type="InterPro" id="IPR013525">
    <property type="entry name" value="ABC2_TM"/>
</dbReference>
<dbReference type="InterPro" id="IPR003439">
    <property type="entry name" value="ABC_transporter-like_ATP-bd"/>
</dbReference>
<dbReference type="InterPro" id="IPR017871">
    <property type="entry name" value="ABC_transporter-like_CS"/>
</dbReference>
<dbReference type="InterPro" id="IPR026082">
    <property type="entry name" value="ABCA"/>
</dbReference>
<dbReference type="InterPro" id="IPR027417">
    <property type="entry name" value="P-loop_NTPase"/>
</dbReference>
<dbReference type="InterPro" id="IPR056264">
    <property type="entry name" value="R2_ABCA1-4-like"/>
</dbReference>
<dbReference type="PANTHER" id="PTHR19229:SF250">
    <property type="entry name" value="ABC TRANSPORTER DOMAIN-CONTAINING PROTEIN-RELATED"/>
    <property type="match status" value="1"/>
</dbReference>
<dbReference type="PANTHER" id="PTHR19229">
    <property type="entry name" value="ATP-BINDING CASSETTE TRANSPORTER SUBFAMILY A ABCA"/>
    <property type="match status" value="1"/>
</dbReference>
<dbReference type="Pfam" id="PF12698">
    <property type="entry name" value="ABC2_membrane_3"/>
    <property type="match status" value="2"/>
</dbReference>
<dbReference type="Pfam" id="PF00005">
    <property type="entry name" value="ABC_tran"/>
    <property type="match status" value="2"/>
</dbReference>
<dbReference type="Pfam" id="PF23321">
    <property type="entry name" value="R1_ABCA1"/>
    <property type="match status" value="1"/>
</dbReference>
<dbReference type="SMART" id="SM00382">
    <property type="entry name" value="AAA"/>
    <property type="match status" value="2"/>
</dbReference>
<dbReference type="SUPFAM" id="SSF52540">
    <property type="entry name" value="P-loop containing nucleoside triphosphate hydrolases"/>
    <property type="match status" value="2"/>
</dbReference>
<dbReference type="PROSITE" id="PS00211">
    <property type="entry name" value="ABC_TRANSPORTER_1"/>
    <property type="match status" value="1"/>
</dbReference>
<dbReference type="PROSITE" id="PS50893">
    <property type="entry name" value="ABC_TRANSPORTER_2"/>
    <property type="match status" value="2"/>
</dbReference>
<feature type="chain" id="PRO_0000452550" description="Glucosylceramide transporter ABCA12">
    <location>
        <begin position="1"/>
        <end position="2595"/>
    </location>
</feature>
<feature type="transmembrane region" description="Helical" evidence="3">
    <location>
        <begin position="23"/>
        <end position="43"/>
    </location>
</feature>
<feature type="transmembrane region" description="Helical" evidence="3">
    <location>
        <begin position="1062"/>
        <end position="1082"/>
    </location>
</feature>
<feature type="transmembrane region" description="Helical" evidence="3">
    <location>
        <begin position="1109"/>
        <end position="1129"/>
    </location>
</feature>
<feature type="transmembrane region" description="Helical" evidence="3">
    <location>
        <begin position="1142"/>
        <end position="1162"/>
    </location>
</feature>
<feature type="transmembrane region" description="Helical" evidence="3">
    <location>
        <begin position="1171"/>
        <end position="1191"/>
    </location>
</feature>
<feature type="transmembrane region" description="Helical" evidence="3">
    <location>
        <begin position="1197"/>
        <end position="1217"/>
    </location>
</feature>
<feature type="transmembrane region" description="Helical" evidence="3">
    <location>
        <begin position="1247"/>
        <end position="1267"/>
    </location>
</feature>
<feature type="transmembrane region" description="Helical" evidence="3">
    <location>
        <begin position="1747"/>
        <end position="1767"/>
    </location>
</feature>
<feature type="transmembrane region" description="Helical" evidence="3">
    <location>
        <begin position="1979"/>
        <end position="1999"/>
    </location>
</feature>
<feature type="transmembrane region" description="Helical" evidence="3">
    <location>
        <begin position="2035"/>
        <end position="2055"/>
    </location>
</feature>
<feature type="transmembrane region" description="Helical" evidence="3">
    <location>
        <begin position="2072"/>
        <end position="2092"/>
    </location>
</feature>
<feature type="transmembrane region" description="Helical" evidence="3">
    <location>
        <begin position="2103"/>
        <end position="2123"/>
    </location>
</feature>
<feature type="transmembrane region" description="Helical" evidence="3">
    <location>
        <begin position="2143"/>
        <end position="2163"/>
    </location>
</feature>
<feature type="transmembrane region" description="Helical" evidence="3">
    <location>
        <begin position="2187"/>
        <end position="2207"/>
    </location>
</feature>
<feature type="transmembrane region" description="Helical" evidence="3">
    <location>
        <begin position="2270"/>
        <end position="2290"/>
    </location>
</feature>
<feature type="domain" description="ABC transporter 1" evidence="4">
    <location>
        <begin position="1346"/>
        <end position="1577"/>
    </location>
</feature>
<feature type="domain" description="ABC transporter 2" evidence="4">
    <location>
        <begin position="2254"/>
        <end position="2489"/>
    </location>
</feature>
<feature type="region of interest" description="Disordered" evidence="5">
    <location>
        <begin position="109"/>
        <end position="143"/>
    </location>
</feature>
<feature type="region of interest" description="Disordered" evidence="5">
    <location>
        <begin position="1672"/>
        <end position="1703"/>
    </location>
</feature>
<feature type="region of interest" description="Disordered" evidence="5">
    <location>
        <begin position="2575"/>
        <end position="2595"/>
    </location>
</feature>
<feature type="compositionally biased region" description="Basic and acidic residues" evidence="5">
    <location>
        <begin position="109"/>
        <end position="119"/>
    </location>
</feature>
<feature type="compositionally biased region" description="Polar residues" evidence="5">
    <location>
        <begin position="120"/>
        <end position="137"/>
    </location>
</feature>
<feature type="compositionally biased region" description="Polar residues" evidence="5">
    <location>
        <begin position="1687"/>
        <end position="1703"/>
    </location>
</feature>
<feature type="compositionally biased region" description="Polar residues" evidence="5">
    <location>
        <begin position="2575"/>
        <end position="2587"/>
    </location>
</feature>
<feature type="binding site" evidence="4">
    <location>
        <begin position="1378"/>
        <end position="1385"/>
    </location>
    <ligand>
        <name>ATP</name>
        <dbReference type="ChEBI" id="CHEBI:30616"/>
    </ligand>
</feature>
<feature type="binding site" evidence="4">
    <location>
        <begin position="2290"/>
        <end position="2297"/>
    </location>
    <ligand>
        <name>ATP</name>
        <dbReference type="ChEBI" id="CHEBI:30616"/>
    </ligand>
</feature>
<feature type="glycosylation site" description="N-linked (GlcNAc...) asparagine" evidence="3">
    <location>
        <position position="120"/>
    </location>
</feature>
<feature type="glycosylation site" description="N-linked (GlcNAc...) asparagine" evidence="3">
    <location>
        <position position="156"/>
    </location>
</feature>
<feature type="glycosylation site" description="N-linked (GlcNAc...) asparagine" evidence="3">
    <location>
        <position position="174"/>
    </location>
</feature>
<feature type="glycosylation site" description="N-linked (GlcNAc...) asparagine" evidence="3">
    <location>
        <position position="214"/>
    </location>
</feature>
<feature type="glycosylation site" description="N-linked (GlcNAc...) asparagine" evidence="3">
    <location>
        <position position="275"/>
    </location>
</feature>
<feature type="glycosylation site" description="N-linked (GlcNAc...) asparagine" evidence="3">
    <location>
        <position position="331"/>
    </location>
</feature>
<feature type="glycosylation site" description="N-linked (GlcNAc...) asparagine" evidence="3">
    <location>
        <position position="365"/>
    </location>
</feature>
<feature type="glycosylation site" description="N-linked (GlcNAc...) asparagine" evidence="3">
    <location>
        <position position="381"/>
    </location>
</feature>
<feature type="glycosylation site" description="N-linked (GlcNAc...) asparagine" evidence="3">
    <location>
        <position position="410"/>
    </location>
</feature>
<feature type="glycosylation site" description="N-linked (GlcNAc...) asparagine" evidence="3">
    <location>
        <position position="433"/>
    </location>
</feature>
<feature type="glycosylation site" description="N-linked (GlcNAc...) asparagine" evidence="3">
    <location>
        <position position="455"/>
    </location>
</feature>
<feature type="glycosylation site" description="N-linked (GlcNAc...) asparagine" evidence="3">
    <location>
        <position position="526"/>
    </location>
</feature>
<feature type="glycosylation site" description="N-linked (GlcNAc...) asparagine" evidence="3">
    <location>
        <position position="541"/>
    </location>
</feature>
<feature type="glycosylation site" description="N-linked (GlcNAc...) asparagine" evidence="3">
    <location>
        <position position="574"/>
    </location>
</feature>
<feature type="glycosylation site" description="N-linked (GlcNAc...) asparagine" evidence="3">
    <location>
        <position position="605"/>
    </location>
</feature>
<feature type="glycosylation site" description="N-linked (GlcNAc...) asparagine" evidence="3">
    <location>
        <position position="645"/>
    </location>
</feature>
<feature type="glycosylation site" description="N-linked (GlcNAc...) asparagine" evidence="3">
    <location>
        <position position="749"/>
    </location>
</feature>
<feature type="glycosylation site" description="N-linked (GlcNAc...) asparagine" evidence="3">
    <location>
        <position position="773"/>
    </location>
</feature>
<feature type="glycosylation site" description="N-linked (GlcNAc...) asparagine" evidence="3">
    <location>
        <position position="812"/>
    </location>
</feature>
<feature type="glycosylation site" description="N-linked (GlcNAc...) asparagine" evidence="3">
    <location>
        <position position="823"/>
    </location>
</feature>
<feature type="glycosylation site" description="N-linked (GlcNAc...) asparagine" evidence="3">
    <location>
        <position position="854"/>
    </location>
</feature>
<feature type="glycosylation site" description="N-linked (GlcNAc...) asparagine" evidence="3">
    <location>
        <position position="917"/>
    </location>
</feature>
<feature type="glycosylation site" description="N-linked (GlcNAc...) asparagine" evidence="3">
    <location>
        <position position="960"/>
    </location>
</feature>
<feature type="glycosylation site" description="N-linked (GlcNAc...) asparagine" evidence="3">
    <location>
        <position position="1167"/>
    </location>
</feature>
<feature type="glycosylation site" description="N-linked (GlcNAc...) asparagine" evidence="3">
    <location>
        <position position="1319"/>
    </location>
</feature>
<feature type="glycosylation site" description="N-linked (GlcNAc...) asparagine" evidence="3">
    <location>
        <position position="1524"/>
    </location>
</feature>
<feature type="glycosylation site" description="N-linked (GlcNAc...) asparagine" evidence="3">
    <location>
        <position position="1663"/>
    </location>
</feature>
<feature type="glycosylation site" description="N-linked (GlcNAc...) asparagine" evidence="3">
    <location>
        <position position="1673"/>
    </location>
</feature>
<feature type="glycosylation site" description="N-linked (GlcNAc...) asparagine" evidence="3">
    <location>
        <position position="1686"/>
    </location>
</feature>
<feature type="glycosylation site" description="N-linked (GlcNAc...) asparagine" evidence="3">
    <location>
        <position position="1690"/>
    </location>
</feature>
<feature type="glycosylation site" description="N-linked (GlcNAc...) asparagine" evidence="3">
    <location>
        <position position="1704"/>
    </location>
</feature>
<feature type="glycosylation site" description="N-linked (GlcNAc...) asparagine" evidence="3">
    <location>
        <position position="1819"/>
    </location>
</feature>
<feature type="glycosylation site" description="N-linked (GlcNAc...) asparagine" evidence="3">
    <location>
        <position position="1835"/>
    </location>
</feature>
<feature type="glycosylation site" description="N-linked (GlcNAc...) asparagine" evidence="3">
    <location>
        <position position="1876"/>
    </location>
</feature>
<feature type="glycosylation site" description="N-linked (GlcNAc...) asparagine" evidence="3">
    <location>
        <position position="1921"/>
    </location>
</feature>
<feature type="glycosylation site" description="N-linked (GlcNAc...) asparagine" evidence="3">
    <location>
        <position position="1952"/>
    </location>
</feature>
<feature type="glycosylation site" description="N-linked (GlcNAc...) asparagine" evidence="3">
    <location>
        <position position="2318"/>
    </location>
</feature>
<feature type="glycosylation site" description="N-linked (GlcNAc...) asparagine" evidence="3">
    <location>
        <position position="2542"/>
    </location>
</feature>
<feature type="glycosylation site" description="N-linked (GlcNAc...) asparagine" evidence="3">
    <location>
        <position position="2547"/>
    </location>
</feature>
<feature type="mutagenesis site" description="In a mouse model for harlequin ichthyosis (HI), smooth skin (smsk) mutant mice show a pronounced perinatal lethal skin phenotype in 25% of the offspring and newborn mutant pups die within a few hours after birth, and appear severely dehydrated with dry cracking skin. Smsk homozygous mutants embryos show a normal appearance at 14.5 dpc, but at 16.5 dpc develop a partial absence of normal skin folds around the trunk and limbs, and by 18.5 dpc develop a taut, thick skin and limb contractures." evidence="12">
    <original>ISMLTGLFGATAGTIFVYGKDIKTDLNTVRKNMGVCMQHDVLFSYLTTKEHLLLYGSIKVPHWTKTQLHEEVKR</original>
    <variation>M</variation>
    <location>
        <begin position="1388"/>
        <end position="1461"/>
    </location>
</feature>
<feature type="mutagenesis site" description="In a mouse model for harlequin ichthyosis (HI), homozygous mice are embryonic lethal but occasionally pups are found in the first few hours after birth but die and are severely dehydrated and fail to suckle normally. Homozygous pups show hallmarks of HI desease including hyperkeratosis, abnormal extracellular lipid lamellae and defects in cornified envelope processing. At 14.5 dpc and 15.5 dpc homozygous embryos appear normal; however from 16.5 dpc onwards they are characterized by an absence of normal skin folds around the trunk and limbs. As development progressed, embryos develop a taut, thick epidermis and multiple contractures affecting the limbs. Late stage embryos are smaller." evidence="7">
    <original>G</original>
    <variation>D</variation>
    <location>
        <position position="1996"/>
    </location>
</feature>
<proteinExistence type="evidence at protein level"/>
<sequence length="2595" mass="292592">MASQFHQLRILVWKNWLGVKRQPLWTLVLILWPVIIFIILAITRTKFPPTAKPTCYLAPRNLPSAGFFPFLQTLLCDTDSKCKDTPYGPRDLLRRKGIDGPLFKESEILKKPSNPKRDSNLSLRSTQVPERSHTSLATVPPRPSYDLEGTGTENFNGSQLLTRILGLEKLLKQNSTPEDIRRELCESYPGYTADYAFSWVTLGKNVFNKFCLSNMTLLESSLQELKYQVSQMSSDPDNQKRVFRGLVQVLSFFSQVQQQREVWQLLSSLPDVFQNGTSLSSLFGVLQKANRVLLVVQKVYPRVQTDEGFSTLQKSVKHLLNTLDSPMQGDNSTHAWSDDDEQTLSPSSLAAQLLILENFEDAILNISSNSPYSPYLACVRNMTDNLAKGSPDNLKLLQSTIHFRKSFLQNGSSEDSFPPFLEILKSKLSQLRNLTELLCESETFSSIKKSCQFSNMSFERLCEDHAFHVQLIEAAELGTDLTTGLLYHDNIISAKLRGLLTGDPSKINLNVDWLLEQALQMNYLENITRLIPTVEAMLHVNTSADASEKPGQLREMFKNIDLLKEDLRAIGMSNTSIDKLLAIPIPDNRAEIISRVFWLHSCDTNVTNPKLEDAMKEFCKLPLPERSHQSYLIGLTLLHYLDIYNFTYKVFFPRKDQKPMERMMELFIKLREILNQLASGTHPLLDKMRSLRQMHLPRSVPLTQAMYRNTRMNSPAGSFSTISQALCSQGITTEYLTAMLPSSQKPKGNHTKDFLTYKLTKEEIASKYGIPLNATPFCFSLYKDIINMPAGPVIWAFLKPMLLGKILYSPYNPTTKAIMEKSNVTLRQLAELREKSQEWMDKSPIFMNSFHLLNQTIPMLQNTLRNPFVQVFVKFSVGLDAVELLKQIDDLDVLRLKLVNNIDIIDQLNTLSSLTVNISSCVLYDRIQASDTVEEMETVAEQLYKSNELFGSVIFKLPSNGSLHRGFDPEKVSLPPIVRYTIRMSLKTAQTTRSIRTKIWAPGPHNSPSHNQIYGRAFIYLQDSIERAIIELQTGRNSQEVAVQVQAVPYPCFMKDNFLTSVSYSLPIVLMVAWVVFIAAFVKKLVYEKDLRLHEYMKMMGVNSCSHFFAWLIESIGFLLVTIAILIVILKFGNILPKTNGFILFLYFSDYSFSVIAMSYLISVFFNNTNIAALIGSLIYVIAFFPFIVLVTVEDELSYVIKVFMSLLSPTAFSYASQYIARYEEQGVGLQWENMYKSPVQDDTTSFGWLCCLILADSFIYFFIAWYVRNVFPGTYGMAAPWYFPILPSYWKERFGCAEVKHEKSNGLMFTNIMMQNTNPSASKTSPDCAFPSNIEPEPKDLQVGVALHGVTKIYGSKTAVENLNLNFYEGHITSLLGPNGAGKTTTISMLTGLFGATAGTIFVYGKDIKTDLNTVRKNMGVCMQHDVLFSYLTTKEHLLLYGSIKVPHWTKTQLHEEVKRTLKDTGLYSHRHKRVGTLSGGMKRKLSISIALIGGSRVVILDEPSTGVDPCSRRSIWDVISKNKTARTIILSTHHLDEAEVLSDRIAFLEQGGLRCCGSPFYLKEAFGDGYHLTLTKKKSPNLDTNAICDTVAVTAMIQSHLPEAYLKEDIGGELVYVLPPFSTKVSGAYLSLLRALDKGMGKLNIGCYGISDTTVEEVFLNLTKDSQKSSNMSLEHLTQRKVGNPSANGTSTPDDLSVSSSNFTDRDDKVLTRSEKLEGFGLLLKKIMAILIKRFHHTRRNWKGLIAQVILPIVFVATAMGLGTLRDSSNSYPEIMISPSIYGTSEQTAFYANFDPSTSGLVSALWNFPGIDNVCLNTSDLQCLKKDDLGKWNTSGEAIDNFGVCSCSDNVQECPKFNYHPPHRRTYSSQVIYNLTGKHMENYLITTANHFVQKRYGGWSFGMKLTNDLRFDVTAVPDNRTLAKVWYDPEGYHSLPAYLNSLNNFLLRVNMSEYDAARHGIIMYSHPYPGVQDQEQATISSLIDILVALSILMGYSVTTASFVTYIVREHQTKAKQLQHISGIGVTCYWVTNFIYDMVFYLVPVAFSIGVIAIFKLPAFYSGNNLGAVSLLLLLFGYATFSWMYLLAGLFHETGMAFITYVCVNLFFGINSIVSLSVVYFLSKEKPNDPTLELISETLKRIFLIFPQFCFGYGLIELSQQQAVLDFLKAYGVEYPSETFEMDKLGAMFVALVSQGTMFFLLRLLINEWLIKKLRLFFRKFTSSPIMETVDEDEDVRAERFRVESGAAEFDLVQLHRLTKTYQLIHKKIIAVNNISLGIPAGECFGLLGVNGAGKTTIFKMLTGDIIPSSGNILIRNKSGSLGHVDSHSSLVGYCPQEDALDDLVTVEEHLYFYARVHGIPEKDIKDTVHKLLRRLHLMAYKDRSTSMCSYGTKRKLSTALALIGKPSILLLDEPSSGMDPKSKRHLWRIISEEVQNKCSVILTSHSMEECEALCTRLAIMVNGRFQCIGSLQHIKSRFGRGFTVKVHLKNNKVSMETLTKFMQLHFPKTYLKDQHLSMLEYHVPVTAGGVANIFDLLETNKTALNITNFLVSQTTLEEVFINFAKDQKSYENVDTSSQGSTISVDSQEDQLDS</sequence>
<name>ABCAC_MOUSE</name>
<gene>
    <name evidence="16" type="primary">Abca12</name>
</gene>
<evidence type="ECO:0000250" key="1"/>
<evidence type="ECO:0000250" key="2">
    <source>
        <dbReference type="UniProtKB" id="Q86UK0"/>
    </source>
</evidence>
<evidence type="ECO:0000255" key="3"/>
<evidence type="ECO:0000255" key="4">
    <source>
        <dbReference type="PROSITE-ProRule" id="PRU00434"/>
    </source>
</evidence>
<evidence type="ECO:0000256" key="5">
    <source>
        <dbReference type="SAM" id="MobiDB-lite"/>
    </source>
</evidence>
<evidence type="ECO:0000269" key="6">
    <source>
    </source>
</evidence>
<evidence type="ECO:0000269" key="7">
    <source>
    </source>
</evidence>
<evidence type="ECO:0000269" key="8">
    <source>
    </source>
</evidence>
<evidence type="ECO:0000269" key="9">
    <source>
    </source>
</evidence>
<evidence type="ECO:0000269" key="10">
    <source>
    </source>
</evidence>
<evidence type="ECO:0000269" key="11">
    <source>
    </source>
</evidence>
<evidence type="ECO:0000269" key="12">
    <source>
    </source>
</evidence>
<evidence type="ECO:0000269" key="13">
    <source>
    </source>
</evidence>
<evidence type="ECO:0000269" key="14">
    <source>
    </source>
</evidence>
<evidence type="ECO:0000305" key="15"/>
<evidence type="ECO:0000312" key="16">
    <source>
        <dbReference type="MGI" id="MGI:2676312"/>
    </source>
</evidence>
<reference key="1">
    <citation type="journal article" date="2009" name="PLoS Biol.">
        <title>Lineage-specific biology revealed by a finished genome assembly of the mouse.</title>
        <authorList>
            <person name="Church D.M."/>
            <person name="Goodstadt L."/>
            <person name="Hillier L.W."/>
            <person name="Zody M.C."/>
            <person name="Goldstein S."/>
            <person name="She X."/>
            <person name="Bult C.J."/>
            <person name="Agarwala R."/>
            <person name="Cherry J.L."/>
            <person name="DiCuccio M."/>
            <person name="Hlavina W."/>
            <person name="Kapustin Y."/>
            <person name="Meric P."/>
            <person name="Maglott D."/>
            <person name="Birtle Z."/>
            <person name="Marques A.C."/>
            <person name="Graves T."/>
            <person name="Zhou S."/>
            <person name="Teague B."/>
            <person name="Potamousis K."/>
            <person name="Churas C."/>
            <person name="Place M."/>
            <person name="Herschleb J."/>
            <person name="Runnheim R."/>
            <person name="Forrest D."/>
            <person name="Amos-Landgraf J."/>
            <person name="Schwartz D.C."/>
            <person name="Cheng Z."/>
            <person name="Lindblad-Toh K."/>
            <person name="Eichler E.E."/>
            <person name="Ponting C.P."/>
        </authorList>
    </citation>
    <scope>NUCLEOTIDE SEQUENCE [LARGE SCALE GENOMIC DNA]</scope>
    <source>
        <strain>C57BL/6J</strain>
    </source>
</reference>
<reference key="2">
    <citation type="journal article" date="2008" name="Hum. Mol. Genet.">
        <title>Harlequin ichthyosis model mouse reveals alveolar collapse and severe fetal skin barrier defects.</title>
        <authorList>
            <person name="Yanagi T."/>
            <person name="Akiyama M."/>
            <person name="Nishihara H."/>
            <person name="Sakai K."/>
            <person name="Nishie W."/>
            <person name="Tanaka S."/>
            <person name="Shimizu H."/>
        </authorList>
    </citation>
    <scope>DISRUPTION PHENOTYPE</scope>
    <scope>TISSUE SPECIFICITY</scope>
    <scope>FUNCTION</scope>
</reference>
<reference key="3">
    <citation type="journal article" date="2008" name="J. Biol. Chem.">
        <title>ABCA12 maintains the epidermal lipid permeability barrier by facilitating formation of ceramide linoleic esters.</title>
        <authorList>
            <person name="Zuo Y."/>
            <person name="Zhuang D.Z."/>
            <person name="Han R."/>
            <person name="Isaac G."/>
            <person name="Tobin J.J."/>
            <person name="McKee M."/>
            <person name="Welti R."/>
            <person name="Brissette J.L."/>
            <person name="Fitzgerald M.L."/>
            <person name="Freeman M.W."/>
        </authorList>
    </citation>
    <scope>DISRUPTION PHENOTYPE</scope>
    <scope>FUNCTION</scope>
</reference>
<reference key="4">
    <citation type="journal article" date="2008" name="PLoS Genet.">
        <title>A mouse model of harlequin ichthyosis delineates a key role for Abca12 in lipid homeostasis.</title>
        <authorList>
            <person name="Smyth I."/>
            <person name="Hacking D.F."/>
            <person name="Hilton A.A."/>
            <person name="Mukhamedova N."/>
            <person name="Meikle P.J."/>
            <person name="Ellis S."/>
            <person name="Satterley K."/>
            <person name="Slattery K."/>
            <person name="Collinge J.E."/>
            <person name="de Graaf C.A."/>
            <person name="Bahlo M."/>
            <person name="Sviridov D."/>
            <person name="Kile B.T."/>
            <person name="Hilton D.J."/>
        </authorList>
    </citation>
    <scope>MUTAGENESIS OF GLY-1996</scope>
    <scope>FUNCTION</scope>
</reference>
<reference key="5">
    <citation type="journal article" date="2010" name="Am. J. Pathol.">
        <title>Self-improvement of keratinocyte differentiation defects during skin maturation in ABCA12-deficient harlequin ichthyosis model mice.</title>
        <authorList>
            <person name="Yanagi T."/>
            <person name="Akiyama M."/>
            <person name="Nishihara H."/>
            <person name="Ishikawa J."/>
            <person name="Sakai K."/>
            <person name="Miyamura Y."/>
            <person name="Naoe A."/>
            <person name="Kitahara T."/>
            <person name="Tanaka S."/>
            <person name="Shimizu H."/>
        </authorList>
    </citation>
    <scope>FUNCTION</scope>
</reference>
<reference key="6">
    <citation type="journal article" date="2013" name="Cell Metab.">
        <title>ABCA12 regulates ABCA1-dependent cholesterol efflux from macrophages and the development of atherosclerosis.</title>
        <authorList>
            <person name="Fu Y."/>
            <person name="Mukhamedova N."/>
            <person name="Ip S."/>
            <person name="D'Souza W."/>
            <person name="Henley K.J."/>
            <person name="DiTommaso T."/>
            <person name="Kesani R."/>
            <person name="Ditiatkovski M."/>
            <person name="Jones L."/>
            <person name="Lane R.M."/>
            <person name="Jennings G."/>
            <person name="Smyth I.M."/>
            <person name="Kile B.T."/>
            <person name="Sviridov D."/>
        </authorList>
    </citation>
    <scope>FUNCTION</scope>
    <scope>INTERACTION WITH NR1H2 AND ABCA1</scope>
</reference>
<reference key="7">
    <citation type="journal article" date="2014" name="J. Lipid Res.">
        <title>Endogenous beta-glucocerebrosidase activity in Abca12-/- epidermis elevates ceramide levels after topical lipid application but does not restore barrier function.</title>
        <authorList>
            <person name="Haller J.F."/>
            <person name="Cavallaro P."/>
            <person name="Hernandez N.J."/>
            <person name="Dolat L."/>
            <person name="Soscia S.J."/>
            <person name="Welti R."/>
            <person name="Grabowski G.A."/>
            <person name="Fitzgerald M.L."/>
            <person name="Freeman M.W."/>
        </authorList>
    </citation>
    <scope>TISSUE SPECIFICITY</scope>
    <scope>DEVELOPMENTAL STAGE</scope>
    <scope>FUNCTION</scope>
</reference>
<reference key="8">
    <citation type="journal article" date="2016" name="PLoS ONE">
        <title>Defects in Stratum Corneum Desquamation Are the Predominant Effect of Impaired ABCA12 Function in a Novel Mouse Model of Harlequin Ichthyosis.</title>
        <authorList>
            <person name="Zhang L."/>
            <person name="Ferreyros M."/>
            <person name="Feng W."/>
            <person name="Hupe M."/>
            <person name="Crumrine D.A."/>
            <person name="Chen J."/>
            <person name="Elias P.M."/>
            <person name="Holleran W.M."/>
            <person name="Niswander L."/>
            <person name="Hohl D."/>
            <person name="Williams T."/>
            <person name="Torchia E.C."/>
            <person name="Roop D.R."/>
        </authorList>
    </citation>
    <scope>FUNCTION</scope>
    <scope>MUTAGENESIS OF 1388-ILE--ARG-1461</scope>
</reference>
<reference key="9">
    <citation type="journal article" date="2020" name="EMBO Rep.">
        <title>ABCA12 regulates insulin secretion from beta-cells.</title>
        <authorList>
            <person name="Ursino G.M."/>
            <person name="Fu Y."/>
            <person name="Cottle D.L."/>
            <person name="Mukhamedova N."/>
            <person name="Jones L.K."/>
            <person name="Low H."/>
            <person name="Tham M.S."/>
            <person name="Gan W.J."/>
            <person name="Mellett N.A."/>
            <person name="Das P.P."/>
            <person name="Weir J.M."/>
            <person name="Ditiatkovski M."/>
            <person name="Fynch S."/>
            <person name="Thorn P."/>
            <person name="Thomas H.E."/>
            <person name="Meikle P.J."/>
            <person name="Parkington H.C."/>
            <person name="Smyth I.M."/>
            <person name="Sviridov D."/>
        </authorList>
    </citation>
    <scope>TISSUE SPECIFICITY</scope>
    <scope>FUNCTION</scope>
</reference>
<reference key="10">
    <citation type="journal article" date="2020" name="J. Dermatol. Sci.">
        <title>Acute skin barrier disruption alters the secretion of lamellar bodies via the multilayered expression of ABCA12.</title>
        <authorList>
            <person name="Teramura T."/>
            <person name="Nomura T."/>
        </authorList>
    </citation>
    <scope>INDUCTION</scope>
</reference>
<keyword id="KW-0067">ATP-binding</keyword>
<keyword id="KW-0968">Cytoplasmic vesicle</keyword>
<keyword id="KW-0325">Glycoprotein</keyword>
<keyword id="KW-0333">Golgi apparatus</keyword>
<keyword id="KW-0445">Lipid transport</keyword>
<keyword id="KW-0472">Membrane</keyword>
<keyword id="KW-0547">Nucleotide-binding</keyword>
<keyword id="KW-1185">Reference proteome</keyword>
<keyword id="KW-0677">Repeat</keyword>
<keyword id="KW-1278">Translocase</keyword>
<keyword id="KW-0812">Transmembrane</keyword>
<keyword id="KW-1133">Transmembrane helix</keyword>
<keyword id="KW-0813">Transport</keyword>
<accession>E9Q876</accession>
<protein>
    <recommendedName>
        <fullName evidence="15">Glucosylceramide transporter ABCA12</fullName>
        <ecNumber evidence="2">7.6.2.1</ecNumber>
    </recommendedName>
    <alternativeName>
        <fullName evidence="15">ATP-binding cassette sub-family A member 12</fullName>
    </alternativeName>
</protein>